<protein>
    <recommendedName>
        <fullName evidence="6 7">CLAVATA3/ESR (CLE)-related protein 6</fullName>
    </recommendedName>
    <component>
        <recommendedName>
            <fullName evidence="6 7">CLE6p</fullName>
        </recommendedName>
    </component>
</protein>
<sequence>MANLILKQSLIILLIIYSTPILSSQARILRTYRPTTMGDMDSQVLLRELGIDLSKFKGQDERRFLVDSERVSPGGPDPQHH</sequence>
<keyword id="KW-0217">Developmental protein</keyword>
<keyword id="KW-0221">Differentiation</keyword>
<keyword id="KW-0325">Glycoprotein</keyword>
<keyword id="KW-0379">Hydroxylation</keyword>
<keyword id="KW-1185">Reference proteome</keyword>
<keyword id="KW-0964">Secreted</keyword>
<keyword id="KW-0732">Signal</keyword>
<dbReference type="EMBL" id="AC005311">
    <property type="protein sequence ID" value="AAM15025.1"/>
    <property type="molecule type" value="Genomic_DNA"/>
</dbReference>
<dbReference type="EMBL" id="CP002685">
    <property type="protein sequence ID" value="AEC08491.1"/>
    <property type="molecule type" value="Genomic_DNA"/>
</dbReference>
<dbReference type="EMBL" id="AY086725">
    <property type="protein sequence ID" value="AAM67246.1"/>
    <property type="molecule type" value="mRNA"/>
</dbReference>
<dbReference type="RefSeq" id="NP_565713.1">
    <property type="nucleotide sequence ID" value="NM_128664.2"/>
</dbReference>
<dbReference type="SMR" id="Q8S8N3"/>
<dbReference type="STRING" id="3702.Q8S8N3"/>
<dbReference type="GlyCosmos" id="Q8S8N3">
    <property type="glycosylation" value="1 site, No reported glycans"/>
</dbReference>
<dbReference type="PaxDb" id="3702-AT2G31085.1"/>
<dbReference type="EnsemblPlants" id="AT2G31085.1">
    <property type="protein sequence ID" value="AT2G31085.1"/>
    <property type="gene ID" value="AT2G31085"/>
</dbReference>
<dbReference type="GeneID" id="817664"/>
<dbReference type="Gramene" id="AT2G31085.1">
    <property type="protein sequence ID" value="AT2G31085.1"/>
    <property type="gene ID" value="AT2G31085"/>
</dbReference>
<dbReference type="KEGG" id="ath:AT2G31085"/>
<dbReference type="Araport" id="AT2G31085"/>
<dbReference type="TAIR" id="AT2G31085">
    <property type="gene designation" value="CLE6"/>
</dbReference>
<dbReference type="HOGENOM" id="CLU_154904_2_0_1"/>
<dbReference type="InParanoid" id="Q8S8N3"/>
<dbReference type="OMA" id="KGYNDER"/>
<dbReference type="OrthoDB" id="1406315at2759"/>
<dbReference type="PhylomeDB" id="Q8S8N3"/>
<dbReference type="PRO" id="PR:Q8S8N3"/>
<dbReference type="Proteomes" id="UP000006548">
    <property type="component" value="Chromosome 2"/>
</dbReference>
<dbReference type="ExpressionAtlas" id="Q8S8N3">
    <property type="expression patterns" value="baseline and differential"/>
</dbReference>
<dbReference type="GO" id="GO:0048046">
    <property type="term" value="C:apoplast"/>
    <property type="evidence" value="ECO:0000255"/>
    <property type="project" value="TAIR"/>
</dbReference>
<dbReference type="GO" id="GO:0045168">
    <property type="term" value="P:cell-cell signaling involved in cell fate commitment"/>
    <property type="evidence" value="ECO:0000250"/>
    <property type="project" value="UniProtKB"/>
</dbReference>
<dbReference type="GO" id="GO:2000023">
    <property type="term" value="P:regulation of lateral root development"/>
    <property type="evidence" value="ECO:0000314"/>
    <property type="project" value="UniProtKB"/>
</dbReference>
<dbReference type="GO" id="GO:2000067">
    <property type="term" value="P:regulation of root morphogenesis"/>
    <property type="evidence" value="ECO:0000314"/>
    <property type="project" value="UniProtKB"/>
</dbReference>
<dbReference type="InterPro" id="IPR039617">
    <property type="entry name" value="CLAVATA3-CLE"/>
</dbReference>
<dbReference type="PANTHER" id="PTHR36016">
    <property type="entry name" value="CLAVATA3/ESR (CLE)-RELATED PROTEIN 7"/>
    <property type="match status" value="1"/>
</dbReference>
<dbReference type="PANTHER" id="PTHR36016:SF1">
    <property type="entry name" value="CLAVATA3_ESR (CLE)-RELATED PROTEIN 5-RELATED"/>
    <property type="match status" value="1"/>
</dbReference>
<accession>Q8S8N3</accession>
<proteinExistence type="evidence at transcript level"/>
<feature type="signal peptide" evidence="2">
    <location>
        <begin position="1"/>
        <end position="26"/>
    </location>
</feature>
<feature type="chain" id="PRO_0000401243" description="CLAVATA3/ESR (CLE)-related protein 6">
    <location>
        <begin position="27"/>
        <end position="81"/>
    </location>
</feature>
<feature type="peptide" id="PRO_0000401244" description="CLE6p" evidence="1">
    <location>
        <begin position="70"/>
        <end position="81"/>
    </location>
</feature>
<feature type="modified residue" description="Hydroxyproline" evidence="1">
    <location>
        <position position="73"/>
    </location>
</feature>
<feature type="modified residue" description="Hydroxyproline" evidence="1">
    <location>
        <position position="76"/>
    </location>
</feature>
<feature type="glycosylation site" description="O-linked (Ara...) hydroxyproline" evidence="1">
    <location>
        <position position="76"/>
    </location>
</feature>
<evidence type="ECO:0000250" key="1">
    <source>
        <dbReference type="UniProtKB" id="O49519"/>
    </source>
</evidence>
<evidence type="ECO:0000255" key="2"/>
<evidence type="ECO:0000269" key="3">
    <source>
    </source>
</evidence>
<evidence type="ECO:0000269" key="4">
    <source>
    </source>
</evidence>
<evidence type="ECO:0000269" key="5">
    <source>
    </source>
</evidence>
<evidence type="ECO:0000303" key="6">
    <source>
    </source>
</evidence>
<evidence type="ECO:0000303" key="7">
    <source>
    </source>
</evidence>
<evidence type="ECO:0000303" key="8">
    <source>
    </source>
</evidence>
<evidence type="ECO:0000305" key="9"/>
<evidence type="ECO:0000312" key="10">
    <source>
        <dbReference type="Araport" id="AT2G31085"/>
    </source>
</evidence>
<evidence type="ECO:0000312" key="11">
    <source>
        <dbReference type="EMBL" id="AAM15025.1"/>
    </source>
</evidence>
<organism>
    <name type="scientific">Arabidopsis thaliana</name>
    <name type="common">Mouse-ear cress</name>
    <dbReference type="NCBI Taxonomy" id="3702"/>
    <lineage>
        <taxon>Eukaryota</taxon>
        <taxon>Viridiplantae</taxon>
        <taxon>Streptophyta</taxon>
        <taxon>Embryophyta</taxon>
        <taxon>Tracheophyta</taxon>
        <taxon>Spermatophyta</taxon>
        <taxon>Magnoliopsida</taxon>
        <taxon>eudicotyledons</taxon>
        <taxon>Gunneridae</taxon>
        <taxon>Pentapetalae</taxon>
        <taxon>rosids</taxon>
        <taxon>malvids</taxon>
        <taxon>Brassicales</taxon>
        <taxon>Brassicaceae</taxon>
        <taxon>Camelineae</taxon>
        <taxon>Arabidopsis</taxon>
    </lineage>
</organism>
<reference key="1">
    <citation type="journal article" date="1999" name="Nature">
        <title>Sequence and analysis of chromosome 2 of the plant Arabidopsis thaliana.</title>
        <authorList>
            <person name="Lin X."/>
            <person name="Kaul S."/>
            <person name="Rounsley S.D."/>
            <person name="Shea T.P."/>
            <person name="Benito M.-I."/>
            <person name="Town C.D."/>
            <person name="Fujii C.Y."/>
            <person name="Mason T.M."/>
            <person name="Bowman C.L."/>
            <person name="Barnstead M.E."/>
            <person name="Feldblyum T.V."/>
            <person name="Buell C.R."/>
            <person name="Ketchum K.A."/>
            <person name="Lee J.J."/>
            <person name="Ronning C.M."/>
            <person name="Koo H.L."/>
            <person name="Moffat K.S."/>
            <person name="Cronin L.A."/>
            <person name="Shen M."/>
            <person name="Pai G."/>
            <person name="Van Aken S."/>
            <person name="Umayam L."/>
            <person name="Tallon L.J."/>
            <person name="Gill J.E."/>
            <person name="Adams M.D."/>
            <person name="Carrera A.J."/>
            <person name="Creasy T.H."/>
            <person name="Goodman H.M."/>
            <person name="Somerville C.R."/>
            <person name="Copenhaver G.P."/>
            <person name="Preuss D."/>
            <person name="Nierman W.C."/>
            <person name="White O."/>
            <person name="Eisen J.A."/>
            <person name="Salzberg S.L."/>
            <person name="Fraser C.M."/>
            <person name="Venter J.C."/>
        </authorList>
    </citation>
    <scope>NUCLEOTIDE SEQUENCE [LARGE SCALE GENOMIC DNA]</scope>
    <source>
        <strain>cv. Columbia</strain>
    </source>
</reference>
<reference key="2">
    <citation type="journal article" date="2017" name="Plant J.">
        <title>Araport11: a complete reannotation of the Arabidopsis thaliana reference genome.</title>
        <authorList>
            <person name="Cheng C.Y."/>
            <person name="Krishnakumar V."/>
            <person name="Chan A.P."/>
            <person name="Thibaud-Nissen F."/>
            <person name="Schobel S."/>
            <person name="Town C.D."/>
        </authorList>
    </citation>
    <scope>GENOME REANNOTATION</scope>
    <source>
        <strain>cv. Columbia</strain>
    </source>
</reference>
<reference key="3">
    <citation type="submission" date="2002-03" db="EMBL/GenBank/DDBJ databases">
        <title>Full-length cDNA from Arabidopsis thaliana.</title>
        <authorList>
            <person name="Brover V.V."/>
            <person name="Troukhan M.E."/>
            <person name="Alexandrov N.A."/>
            <person name="Lu Y.-P."/>
            <person name="Flavell R.B."/>
            <person name="Feldmann K.A."/>
        </authorList>
    </citation>
    <scope>NUCLEOTIDE SEQUENCE [LARGE SCALE MRNA]</scope>
</reference>
<reference key="4">
    <citation type="journal article" date="2001" name="Plant Physiol.">
        <title>A large family of genes that share homology with CLAVATA3.</title>
        <authorList>
            <person name="Cock J.M."/>
            <person name="McCormick S."/>
        </authorList>
    </citation>
    <scope>GENE FAMILY</scope>
    <scope>NOMENCLATURE</scope>
</reference>
<reference key="5">
    <citation type="journal article" date="2003" name="Plant Mol. Biol.">
        <title>The Arabidopsis CLV3-like (CLE) genes are expressed in diverse tissues and encode secreted proteins.</title>
        <authorList>
            <person name="Sharma V.K."/>
            <person name="Ramirez J."/>
            <person name="Fletcher J.C."/>
        </authorList>
    </citation>
    <scope>TISSUE SPECIFICITY</scope>
</reference>
<reference key="6">
    <citation type="journal article" date="2006" name="Plant Physiol.">
        <title>Evidence for functional conservation, sufficiency, and proteolytic processing of the CLAVATA3 CLE domain.</title>
        <authorList>
            <person name="Ni J."/>
            <person name="Clark S.E."/>
        </authorList>
    </citation>
    <scope>FUNCTION</scope>
</reference>
<reference key="7">
    <citation type="journal article" date="2006" name="Plant Physiol.">
        <title>Gain-of-function phenotypes of many CLAVATA3/ESR genes, including four new family members, correlate with tandem variations in the conserved CLAVATA3/ESR domain.</title>
        <authorList>
            <person name="Strabala T.J."/>
            <person name="O'donnell P.J."/>
            <person name="Smit A.-M."/>
            <person name="Ampomah-Dwamena C."/>
            <person name="Martin E.J."/>
            <person name="Netzler N."/>
            <person name="Nieuwenhuizen N.J."/>
            <person name="Quinn B.D."/>
            <person name="Foote H.C.C."/>
            <person name="Hudson K.R."/>
        </authorList>
    </citation>
    <scope>FUNCTION</scope>
    <scope>GENE FAMILY</scope>
</reference>
<reference key="8">
    <citation type="journal article" date="2008" name="Cell. Mol. Life Sci.">
        <title>The CLE family of plant polypeptide signaling molecules.</title>
        <authorList>
            <person name="Jun J.H."/>
            <person name="Fiume E."/>
            <person name="Fletcher J.C."/>
        </authorList>
    </citation>
    <scope>REVIEW</scope>
</reference>
<reference key="9">
    <citation type="journal article" date="2008" name="Curr. Opin. Plant Biol.">
        <title>Diverse and conserved roles of CLE peptides.</title>
        <authorList>
            <person name="Mitchum M.G."/>
            <person name="Wang X."/>
            <person name="Davis E.L."/>
        </authorList>
    </citation>
    <scope>REVIEW</scope>
</reference>
<reference key="10">
    <citation type="journal article" date="2010" name="Protoplasma">
        <title>CLE peptide signaling during plant development.</title>
        <authorList>
            <person name="Wang G."/>
            <person name="Fiers M."/>
        </authorList>
    </citation>
    <scope>REVIEW</scope>
</reference>
<name>CLE6_ARATH</name>
<gene>
    <name evidence="6 7 8" type="primary">CLE6</name>
    <name type="synonym">CLE4</name>
    <name evidence="10" type="ordered locus">At2g31085</name>
    <name evidence="11" type="ORF">T16B12</name>
</gene>
<comment type="function">
    <molecule>CLE6p</molecule>
    <text evidence="4 5">Extracellular signal peptide that regulates cell fate.</text>
</comment>
<comment type="subcellular location">
    <molecule>CLE6p</molecule>
    <subcellularLocation>
        <location evidence="1">Secreted</location>
        <location evidence="1">Extracellular space</location>
    </subcellularLocation>
</comment>
<comment type="tissue specificity">
    <molecule>CLE6p</molecule>
    <text evidence="3">Mostly expressed in roots, seedlings, stems and flowers, and, to a lower extent, in apex and siliques.</text>
</comment>
<comment type="PTM">
    <molecule>CLE6p</molecule>
    <text evidence="1">The O-glycosylation (arabinosylation) of the hydroxyproline Pro-76 enhances binding affinity of the CLE6p peptide for its receptor.</text>
</comment>
<comment type="similarity">
    <text evidence="9">Belongs to the CLV3/ESR signal peptide family.</text>
</comment>